<organism>
    <name type="scientific">Sterkiella nova</name>
    <name type="common">Ciliate</name>
    <name type="synonym">Oxytricha nova</name>
    <dbReference type="NCBI Taxonomy" id="200597"/>
    <lineage>
        <taxon>Eukaryota</taxon>
        <taxon>Sar</taxon>
        <taxon>Alveolata</taxon>
        <taxon>Ciliophora</taxon>
        <taxon>Intramacronucleata</taxon>
        <taxon>Spirotrichea</taxon>
        <taxon>Stichotrichia</taxon>
        <taxon>Sporadotrichida</taxon>
        <taxon>Oxytrichidae</taxon>
        <taxon>Stylonychinae</taxon>
        <taxon>Sterkiella</taxon>
    </lineage>
</organism>
<reference key="1">
    <citation type="journal article" date="1989" name="Proc. Natl. Acad. Sci. U.S.A.">
        <title>Reordering of nine exons is necessary to form a functional actin gene in Oxytricha nova.</title>
        <authorList>
            <person name="Greslin A.F."/>
            <person name="Prescott D.M."/>
            <person name="Oka Y."/>
            <person name="Loukin S.H."/>
            <person name="Chappell J.C."/>
        </authorList>
    </citation>
    <scope>NUCLEOTIDE SEQUENCE [GENOMIC DNA]</scope>
</reference>
<dbReference type="EC" id="3.6.4.-" evidence="1"/>
<dbReference type="EMBL" id="M25531">
    <property type="status" value="NOT_ANNOTATED_CDS"/>
    <property type="molecule type" value="Genomic_DNA"/>
</dbReference>
<dbReference type="EMBL" id="M25530">
    <property type="status" value="NOT_ANNOTATED_CDS"/>
    <property type="molecule type" value="Genomic_DNA"/>
</dbReference>
<dbReference type="SMR" id="P55805"/>
<dbReference type="GO" id="GO:0005737">
    <property type="term" value="C:cytoplasm"/>
    <property type="evidence" value="ECO:0007669"/>
    <property type="project" value="UniProtKB-KW"/>
</dbReference>
<dbReference type="GO" id="GO:0005856">
    <property type="term" value="C:cytoskeleton"/>
    <property type="evidence" value="ECO:0007669"/>
    <property type="project" value="UniProtKB-SubCell"/>
</dbReference>
<dbReference type="GO" id="GO:0005524">
    <property type="term" value="F:ATP binding"/>
    <property type="evidence" value="ECO:0007669"/>
    <property type="project" value="UniProtKB-KW"/>
</dbReference>
<dbReference type="GO" id="GO:0016787">
    <property type="term" value="F:hydrolase activity"/>
    <property type="evidence" value="ECO:0007669"/>
    <property type="project" value="UniProtKB-KW"/>
</dbReference>
<dbReference type="FunFam" id="3.30.420.40:FF:000291">
    <property type="entry name" value="Actin, alpha skeletal muscle"/>
    <property type="match status" value="1"/>
</dbReference>
<dbReference type="FunFam" id="3.90.640.10:FF:000047">
    <property type="entry name" value="Actin, alpha skeletal muscle"/>
    <property type="match status" value="1"/>
</dbReference>
<dbReference type="FunFam" id="3.30.420.40:FF:000058">
    <property type="entry name" value="Putative actin-related protein 5"/>
    <property type="match status" value="1"/>
</dbReference>
<dbReference type="Gene3D" id="3.30.420.40">
    <property type="match status" value="2"/>
</dbReference>
<dbReference type="Gene3D" id="3.90.640.10">
    <property type="entry name" value="Actin, Chain A, domain 4"/>
    <property type="match status" value="1"/>
</dbReference>
<dbReference type="InterPro" id="IPR004000">
    <property type="entry name" value="Actin"/>
</dbReference>
<dbReference type="InterPro" id="IPR020902">
    <property type="entry name" value="Actin/actin-like_CS"/>
</dbReference>
<dbReference type="InterPro" id="IPR004001">
    <property type="entry name" value="Actin_CS"/>
</dbReference>
<dbReference type="InterPro" id="IPR043129">
    <property type="entry name" value="ATPase_NBD"/>
</dbReference>
<dbReference type="PANTHER" id="PTHR11937">
    <property type="entry name" value="ACTIN"/>
    <property type="match status" value="1"/>
</dbReference>
<dbReference type="Pfam" id="PF00022">
    <property type="entry name" value="Actin"/>
    <property type="match status" value="1"/>
</dbReference>
<dbReference type="PRINTS" id="PR00190">
    <property type="entry name" value="ACTIN"/>
</dbReference>
<dbReference type="SMART" id="SM00268">
    <property type="entry name" value="ACTIN"/>
    <property type="match status" value="1"/>
</dbReference>
<dbReference type="SUPFAM" id="SSF53067">
    <property type="entry name" value="Actin-like ATPase domain"/>
    <property type="match status" value="2"/>
</dbReference>
<dbReference type="PROSITE" id="PS00406">
    <property type="entry name" value="ACTINS_1"/>
    <property type="match status" value="1"/>
</dbReference>
<dbReference type="PROSITE" id="PS00432">
    <property type="entry name" value="ACTINS_2"/>
    <property type="match status" value="1"/>
</dbReference>
<dbReference type="PROSITE" id="PS01132">
    <property type="entry name" value="ACTINS_ACT_LIKE"/>
    <property type="match status" value="1"/>
</dbReference>
<protein>
    <recommendedName>
        <fullName>Actin, cytoplasmic</fullName>
        <ecNumber evidence="1">3.6.4.-</ecNumber>
    </recommendedName>
    <alternativeName>
        <fullName>Actin, micronuclear</fullName>
    </alternativeName>
</protein>
<keyword id="KW-0067">ATP-binding</keyword>
<keyword id="KW-0963">Cytoplasm</keyword>
<keyword id="KW-0206">Cytoskeleton</keyword>
<keyword id="KW-0378">Hydrolase</keyword>
<keyword id="KW-0547">Nucleotide-binding</keyword>
<gene>
    <name type="primary">MIC-ACT-1</name>
</gene>
<gene>
    <name type="primary">MIC-ACT-2</name>
</gene>
<evidence type="ECO:0000250" key="1">
    <source>
        <dbReference type="UniProtKB" id="P68137"/>
    </source>
</evidence>
<evidence type="ECO:0000305" key="2"/>
<accession>P55805</accession>
<comment type="function">
    <text>Actins are highly conserved proteins that are involved in various types of cell motility and are ubiquitously expressed in all eukaryotic cells.</text>
</comment>
<comment type="catalytic activity">
    <reaction evidence="1">
        <text>ATP + H2O = ADP + phosphate + H(+)</text>
        <dbReference type="Rhea" id="RHEA:13065"/>
        <dbReference type="ChEBI" id="CHEBI:15377"/>
        <dbReference type="ChEBI" id="CHEBI:15378"/>
        <dbReference type="ChEBI" id="CHEBI:30616"/>
        <dbReference type="ChEBI" id="CHEBI:43474"/>
        <dbReference type="ChEBI" id="CHEBI:456216"/>
    </reaction>
</comment>
<comment type="subcellular location">
    <subcellularLocation>
        <location>Cytoplasm</location>
        <location>Cytoskeleton</location>
    </subcellularLocation>
</comment>
<comment type="similarity">
    <text evidence="2">Belongs to the actin family.</text>
</comment>
<proteinExistence type="inferred from homology"/>
<sequence length="375" mass="41967">MADKQTVVVDNGSGVVKAGFSGEDAPRAVFPSIIGRPKNVSALIGVDSASEYIGDEAQQKRGVLKIFYPIEHGIIKDWEDMEKIWNHTFYVELRVQPDEHPVLLTEAPLNPKTNREKMTQIMFETFNVPALYVAIQAVLSLYSAGRTTGIVCDAGDGVTHTVPIYEGFSIPHAVSRIQLAGRDLTTFMAKLLTEKGYVFTSSAEMEIVRDIKEKLCFVALDYEAAMKQSYESTTFEKNYELPDGRVITIGNARFRCPEYLFKPLEMNGKELDSIQSLTYNSIQECDVDVRRDLYQNIILSGGTTMYEGIGERLLKEIEARAPKSINVKVIASPDRRFAVWRGGSTLTSLSTFASMWITKEDYDENGASIVHRKCL</sequence>
<feature type="chain" id="PRO_0000088977" description="Actin, cytoplasmic">
    <location>
        <begin position="1"/>
        <end position="375"/>
    </location>
</feature>
<name>ACT2_STENO</name>